<keyword id="KW-0067">ATP-binding</keyword>
<keyword id="KW-0227">DNA damage</keyword>
<keyword id="KW-0234">DNA repair</keyword>
<keyword id="KW-0238">DNA-binding</keyword>
<keyword id="KW-0547">Nucleotide-binding</keyword>
<proteinExistence type="inferred from homology"/>
<organism>
    <name type="scientific">Salmonella choleraesuis (strain SC-B67)</name>
    <dbReference type="NCBI Taxonomy" id="321314"/>
    <lineage>
        <taxon>Bacteria</taxon>
        <taxon>Pseudomonadati</taxon>
        <taxon>Pseudomonadota</taxon>
        <taxon>Gammaproteobacteria</taxon>
        <taxon>Enterobacterales</taxon>
        <taxon>Enterobacteriaceae</taxon>
        <taxon>Salmonella</taxon>
    </lineage>
</organism>
<accession>Q57KL5</accession>
<name>MUTS_SALCH</name>
<gene>
    <name evidence="1" type="primary">mutS</name>
    <name type="ordered locus">SCH_2841</name>
</gene>
<comment type="function">
    <text evidence="1">This protein is involved in the repair of mismatches in DNA. It is possible that it carries out the mismatch recognition step. This protein has a weak ATPase activity.</text>
</comment>
<comment type="similarity">
    <text evidence="1">Belongs to the DNA mismatch repair MutS family.</text>
</comment>
<protein>
    <recommendedName>
        <fullName evidence="1">DNA mismatch repair protein MutS</fullName>
    </recommendedName>
</protein>
<evidence type="ECO:0000255" key="1">
    <source>
        <dbReference type="HAMAP-Rule" id="MF_00096"/>
    </source>
</evidence>
<feature type="chain" id="PRO_0000224401" description="DNA mismatch repair protein MutS">
    <location>
        <begin position="1"/>
        <end position="855"/>
    </location>
</feature>
<feature type="binding site" evidence="1">
    <location>
        <begin position="616"/>
        <end position="623"/>
    </location>
    <ligand>
        <name>ATP</name>
        <dbReference type="ChEBI" id="CHEBI:30616"/>
    </ligand>
</feature>
<dbReference type="EMBL" id="AE017220">
    <property type="protein sequence ID" value="AAX66747.1"/>
    <property type="molecule type" value="Genomic_DNA"/>
</dbReference>
<dbReference type="RefSeq" id="WP_001005807.1">
    <property type="nucleotide sequence ID" value="NC_006905.1"/>
</dbReference>
<dbReference type="SMR" id="Q57KL5"/>
<dbReference type="KEGG" id="sec:SCH_2841"/>
<dbReference type="HOGENOM" id="CLU_002472_4_0_6"/>
<dbReference type="Proteomes" id="UP000000538">
    <property type="component" value="Chromosome"/>
</dbReference>
<dbReference type="GO" id="GO:0005829">
    <property type="term" value="C:cytosol"/>
    <property type="evidence" value="ECO:0007669"/>
    <property type="project" value="TreeGrafter"/>
</dbReference>
<dbReference type="GO" id="GO:0005524">
    <property type="term" value="F:ATP binding"/>
    <property type="evidence" value="ECO:0007669"/>
    <property type="project" value="UniProtKB-UniRule"/>
</dbReference>
<dbReference type="GO" id="GO:0140664">
    <property type="term" value="F:ATP-dependent DNA damage sensor activity"/>
    <property type="evidence" value="ECO:0007669"/>
    <property type="project" value="InterPro"/>
</dbReference>
<dbReference type="GO" id="GO:0003684">
    <property type="term" value="F:damaged DNA binding"/>
    <property type="evidence" value="ECO:0007669"/>
    <property type="project" value="UniProtKB-UniRule"/>
</dbReference>
<dbReference type="GO" id="GO:0030983">
    <property type="term" value="F:mismatched DNA binding"/>
    <property type="evidence" value="ECO:0007669"/>
    <property type="project" value="InterPro"/>
</dbReference>
<dbReference type="GO" id="GO:0006298">
    <property type="term" value="P:mismatch repair"/>
    <property type="evidence" value="ECO:0007669"/>
    <property type="project" value="UniProtKB-UniRule"/>
</dbReference>
<dbReference type="CDD" id="cd03284">
    <property type="entry name" value="ABC_MutS1"/>
    <property type="match status" value="1"/>
</dbReference>
<dbReference type="FunFam" id="1.10.1420.10:FF:000002">
    <property type="entry name" value="DNA mismatch repair protein MutS"/>
    <property type="match status" value="1"/>
</dbReference>
<dbReference type="FunFam" id="3.30.420.110:FF:000001">
    <property type="entry name" value="DNA mismatch repair protein MutS"/>
    <property type="match status" value="1"/>
</dbReference>
<dbReference type="FunFam" id="3.40.1170.10:FF:000001">
    <property type="entry name" value="DNA mismatch repair protein MutS"/>
    <property type="match status" value="1"/>
</dbReference>
<dbReference type="FunFam" id="3.40.50.300:FF:000283">
    <property type="entry name" value="DNA mismatch repair protein MutS"/>
    <property type="match status" value="1"/>
</dbReference>
<dbReference type="Gene3D" id="1.10.1420.10">
    <property type="match status" value="2"/>
</dbReference>
<dbReference type="Gene3D" id="6.10.140.430">
    <property type="match status" value="1"/>
</dbReference>
<dbReference type="Gene3D" id="3.40.1170.10">
    <property type="entry name" value="DNA repair protein MutS, domain I"/>
    <property type="match status" value="1"/>
</dbReference>
<dbReference type="Gene3D" id="3.30.420.110">
    <property type="entry name" value="MutS, connector domain"/>
    <property type="match status" value="1"/>
</dbReference>
<dbReference type="Gene3D" id="3.40.50.300">
    <property type="entry name" value="P-loop containing nucleotide triphosphate hydrolases"/>
    <property type="match status" value="1"/>
</dbReference>
<dbReference type="HAMAP" id="MF_00096">
    <property type="entry name" value="MutS"/>
    <property type="match status" value="1"/>
</dbReference>
<dbReference type="InterPro" id="IPR005748">
    <property type="entry name" value="DNA_mismatch_repair_MutS"/>
</dbReference>
<dbReference type="InterPro" id="IPR007695">
    <property type="entry name" value="DNA_mismatch_repair_MutS-lik_N"/>
</dbReference>
<dbReference type="InterPro" id="IPR017261">
    <property type="entry name" value="DNA_mismatch_repair_MutS/MSH"/>
</dbReference>
<dbReference type="InterPro" id="IPR000432">
    <property type="entry name" value="DNA_mismatch_repair_MutS_C"/>
</dbReference>
<dbReference type="InterPro" id="IPR007861">
    <property type="entry name" value="DNA_mismatch_repair_MutS_clamp"/>
</dbReference>
<dbReference type="InterPro" id="IPR007696">
    <property type="entry name" value="DNA_mismatch_repair_MutS_core"/>
</dbReference>
<dbReference type="InterPro" id="IPR016151">
    <property type="entry name" value="DNA_mismatch_repair_MutS_N"/>
</dbReference>
<dbReference type="InterPro" id="IPR036187">
    <property type="entry name" value="DNA_mismatch_repair_MutS_sf"/>
</dbReference>
<dbReference type="InterPro" id="IPR007860">
    <property type="entry name" value="DNA_mmatch_repair_MutS_con_dom"/>
</dbReference>
<dbReference type="InterPro" id="IPR045076">
    <property type="entry name" value="MutS"/>
</dbReference>
<dbReference type="InterPro" id="IPR036678">
    <property type="entry name" value="MutS_con_dom_sf"/>
</dbReference>
<dbReference type="InterPro" id="IPR027417">
    <property type="entry name" value="P-loop_NTPase"/>
</dbReference>
<dbReference type="NCBIfam" id="TIGR01070">
    <property type="entry name" value="mutS1"/>
    <property type="match status" value="1"/>
</dbReference>
<dbReference type="NCBIfam" id="NF003810">
    <property type="entry name" value="PRK05399.1"/>
    <property type="match status" value="1"/>
</dbReference>
<dbReference type="PANTHER" id="PTHR11361:SF34">
    <property type="entry name" value="DNA MISMATCH REPAIR PROTEIN MSH1, MITOCHONDRIAL"/>
    <property type="match status" value="1"/>
</dbReference>
<dbReference type="PANTHER" id="PTHR11361">
    <property type="entry name" value="DNA MISMATCH REPAIR PROTEIN MUTS FAMILY MEMBER"/>
    <property type="match status" value="1"/>
</dbReference>
<dbReference type="Pfam" id="PF01624">
    <property type="entry name" value="MutS_I"/>
    <property type="match status" value="1"/>
</dbReference>
<dbReference type="Pfam" id="PF05188">
    <property type="entry name" value="MutS_II"/>
    <property type="match status" value="1"/>
</dbReference>
<dbReference type="Pfam" id="PF05192">
    <property type="entry name" value="MutS_III"/>
    <property type="match status" value="1"/>
</dbReference>
<dbReference type="Pfam" id="PF05190">
    <property type="entry name" value="MutS_IV"/>
    <property type="match status" value="1"/>
</dbReference>
<dbReference type="Pfam" id="PF00488">
    <property type="entry name" value="MutS_V"/>
    <property type="match status" value="1"/>
</dbReference>
<dbReference type="PIRSF" id="PIRSF037677">
    <property type="entry name" value="DNA_mis_repair_Msh6"/>
    <property type="match status" value="1"/>
</dbReference>
<dbReference type="SMART" id="SM00534">
    <property type="entry name" value="MUTSac"/>
    <property type="match status" value="1"/>
</dbReference>
<dbReference type="SMART" id="SM00533">
    <property type="entry name" value="MUTSd"/>
    <property type="match status" value="1"/>
</dbReference>
<dbReference type="SUPFAM" id="SSF55271">
    <property type="entry name" value="DNA repair protein MutS, domain I"/>
    <property type="match status" value="1"/>
</dbReference>
<dbReference type="SUPFAM" id="SSF53150">
    <property type="entry name" value="DNA repair protein MutS, domain II"/>
    <property type="match status" value="1"/>
</dbReference>
<dbReference type="SUPFAM" id="SSF48334">
    <property type="entry name" value="DNA repair protein MutS, domain III"/>
    <property type="match status" value="1"/>
</dbReference>
<dbReference type="SUPFAM" id="SSF52540">
    <property type="entry name" value="P-loop containing nucleoside triphosphate hydrolases"/>
    <property type="match status" value="1"/>
</dbReference>
<dbReference type="PROSITE" id="PS00486">
    <property type="entry name" value="DNA_MISMATCH_REPAIR_2"/>
    <property type="match status" value="1"/>
</dbReference>
<sequence>MNESFDKDFSNHTPMMQQYLKLKAQHPEILLFYRMGDFYELFYDDAKRASQLLDISLTKRGASAGEPIPMAGIPHHAVENYLAKLVNQGESVAICEQIGDPATSKGPVERKVVRIVTPGTISDEALLQERQDNLLAAIWQDGKGYGYATLDISSGRFRLSEPADRETMAAELQRTNPAELLYAEDFAEMALIEGRRGLRRRPLWEFEIDTARQQLNLQFGTRDLVGFGVENASRGLCAAGCLLQYVKDTQRTSLPHIRSITMERQQDSIIMDAATRRNLEITQNLAGGVENTLAAVLDCTVTPMGSRMLKRWLHMPVRNTDILRERQQTIGALQDTVSELQPVLRQVGDLERILARLALRTARPRDLARMRHAFQQLPELHAQLETVDSAPVQALRKKMGDFAELRDLLERAIIDAPPVLVRDGGVIAPGYHEELDEWRALADGATDYLDRLEIRERERTGLDTLKVGYNAVHGYYIQISRGQSHLAPINYVRRQTLKNAERYIIPELKEYEDKVLTSKGKALALEKQLYDELFDLLLPHLADLQQSANALAELDVLVNLAERAWTLNYTCPTFTDKPGIRITEGRHPVVEQVLNEPFIANPLNLSPQRRMLIITGPNMGGKSTYMRQTALIALLAYIGSYVPAQNVEIGPIDRIFTRVGAADDLASGRSTFMVEMTETANILHNATENSLVLMDEIGRGTSTYDGLSLAWACAENLANKIKALTLFATHYFELTQLPEKMEGVANVHLDALEHGDTIAFMHSVQDGAASKSYGLAVAALAGVPKEVIKRARQKLRELESISPNAAATQVDGTQMSLLAAPEETSPAVEALENLDPDSLTPRQALEWIYRLKSLV</sequence>
<reference key="1">
    <citation type="journal article" date="2005" name="Nucleic Acids Res.">
        <title>The genome sequence of Salmonella enterica serovar Choleraesuis, a highly invasive and resistant zoonotic pathogen.</title>
        <authorList>
            <person name="Chiu C.-H."/>
            <person name="Tang P."/>
            <person name="Chu C."/>
            <person name="Hu S."/>
            <person name="Bao Q."/>
            <person name="Yu J."/>
            <person name="Chou Y.-Y."/>
            <person name="Wang H.-S."/>
            <person name="Lee Y.-S."/>
        </authorList>
    </citation>
    <scope>NUCLEOTIDE SEQUENCE [LARGE SCALE GENOMIC DNA]</scope>
    <source>
        <strain>SC-B67</strain>
    </source>
</reference>